<name>HOL3_HOLDI</name>
<feature type="signal peptide" evidence="2">
    <location>
        <begin position="1"/>
        <end position="20"/>
    </location>
</feature>
<feature type="chain" id="PRO_0000004990" description="Holotricin-3">
    <location>
        <begin position="21"/>
        <end position="104"/>
    </location>
</feature>
<feature type="repeat" description="1">
    <location>
        <begin position="27"/>
        <end position="30"/>
    </location>
</feature>
<feature type="repeat" description="2">
    <location>
        <begin position="31"/>
        <end position="34"/>
    </location>
</feature>
<feature type="repeat" description="3">
    <location>
        <begin position="35"/>
        <end position="38"/>
    </location>
</feature>
<feature type="repeat" description="4">
    <location>
        <begin position="39"/>
        <end position="42"/>
    </location>
</feature>
<feature type="repeat" description="5">
    <location>
        <begin position="43"/>
        <end position="46"/>
    </location>
</feature>
<feature type="repeat" description="6">
    <location>
        <begin position="47"/>
        <end position="50"/>
    </location>
</feature>
<feature type="repeat" description="7">
    <location>
        <begin position="51"/>
        <end position="54"/>
    </location>
</feature>
<feature type="repeat" description="8">
    <location>
        <begin position="55"/>
        <end position="58"/>
    </location>
</feature>
<feature type="repeat" description="9">
    <location>
        <begin position="59"/>
        <end position="62"/>
    </location>
</feature>
<feature type="repeat" description="10">
    <location>
        <begin position="63"/>
        <end position="66"/>
    </location>
</feature>
<feature type="repeat" description="11">
    <location>
        <begin position="67"/>
        <end position="70"/>
    </location>
</feature>
<feature type="repeat" description="12">
    <location>
        <begin position="71"/>
        <end position="74"/>
    </location>
</feature>
<feature type="repeat" description="13">
    <location>
        <begin position="75"/>
        <end position="78"/>
    </location>
</feature>
<feature type="repeat" description="14">
    <location>
        <begin position="79"/>
        <end position="82"/>
    </location>
</feature>
<feature type="repeat" description="15">
    <location>
        <begin position="83"/>
        <end position="86"/>
    </location>
</feature>
<feature type="repeat" description="16">
    <location>
        <begin position="87"/>
        <end position="90"/>
    </location>
</feature>
<feature type="repeat" description="17">
    <location>
        <begin position="91"/>
        <end position="94"/>
    </location>
</feature>
<feature type="repeat" description="18">
    <location>
        <begin position="96"/>
        <end position="98"/>
    </location>
</feature>
<feature type="region of interest" description="Disordered" evidence="1">
    <location>
        <begin position="22"/>
        <end position="104"/>
    </location>
</feature>
<feature type="region of interest" description="18 X 4 AA approximate tandem repeats of H-G-G-G">
    <location>
        <begin position="27"/>
        <end position="98"/>
    </location>
</feature>
<feature type="compositionally biased region" description="Gly residues" evidence="1">
    <location>
        <begin position="23"/>
        <end position="97"/>
    </location>
</feature>
<evidence type="ECO:0000256" key="1">
    <source>
        <dbReference type="SAM" id="MobiDB-lite"/>
    </source>
</evidence>
<evidence type="ECO:0000269" key="2">
    <source>
    </source>
</evidence>
<evidence type="ECO:0000305" key="3"/>
<comment type="function">
    <text>Has antifungal activity against C.albicans.</text>
</comment>
<comment type="subcellular location">
    <subcellularLocation>
        <location>Secreted</location>
    </subcellularLocation>
</comment>
<comment type="similarity">
    <text evidence="3">To T.molitor tenecin 3.</text>
</comment>
<reference key="1">
    <citation type="journal article" date="1995" name="Biol. Pharm. Bull.">
        <title>Purification and cDNA cloning of an antifungal protein from the hemolymph of Holotrichia diomphalia larvae.</title>
        <authorList>
            <person name="Lee S.Y."/>
            <person name="Moon H.J."/>
            <person name="Kurata S."/>
            <person name="Natori S."/>
            <person name="Lee B.L."/>
        </authorList>
    </citation>
    <scope>NUCLEOTIDE SEQUENCE [MRNA]</scope>
    <scope>PROTEIN SEQUENCE OF 21-40</scope>
    <source>
        <tissue>Larval hemolymph</tissue>
    </source>
</reference>
<dbReference type="EMBL" id="D13744">
    <property type="protein sequence ID" value="BAA02889.1"/>
    <property type="molecule type" value="mRNA"/>
</dbReference>
<dbReference type="PIR" id="JC4190">
    <property type="entry name" value="JC4190"/>
</dbReference>
<dbReference type="GO" id="GO:0005576">
    <property type="term" value="C:extracellular region"/>
    <property type="evidence" value="ECO:0007669"/>
    <property type="project" value="UniProtKB-SubCell"/>
</dbReference>
<dbReference type="GO" id="GO:0042742">
    <property type="term" value="P:defense response to bacterium"/>
    <property type="evidence" value="ECO:0007669"/>
    <property type="project" value="UniProtKB-KW"/>
</dbReference>
<dbReference type="GO" id="GO:0050832">
    <property type="term" value="P:defense response to fungus"/>
    <property type="evidence" value="ECO:0007669"/>
    <property type="project" value="UniProtKB-KW"/>
</dbReference>
<dbReference type="GO" id="GO:0045087">
    <property type="term" value="P:innate immune response"/>
    <property type="evidence" value="ECO:0007669"/>
    <property type="project" value="UniProtKB-KW"/>
</dbReference>
<dbReference type="GO" id="GO:0031640">
    <property type="term" value="P:killing of cells of another organism"/>
    <property type="evidence" value="ECO:0007669"/>
    <property type="project" value="UniProtKB-KW"/>
</dbReference>
<sequence length="104" mass="9026">MNKLIILGLACIIAVASAMPYGPGDGHGGGHGGGHGGGHGNGQGGGHGHGPGGGFGGGHGGGHGGGGRGGGGSGGGGSPGHGAGGGYPGGHGGGHHGGYQTHGY</sequence>
<protein>
    <recommendedName>
        <fullName>Holotricin-3</fullName>
    </recommendedName>
</protein>
<proteinExistence type="evidence at protein level"/>
<keyword id="KW-0044">Antibiotic</keyword>
<keyword id="KW-0929">Antimicrobial</keyword>
<keyword id="KW-0903">Direct protein sequencing</keyword>
<keyword id="KW-0295">Fungicide</keyword>
<keyword id="KW-0391">Immunity</keyword>
<keyword id="KW-0399">Innate immunity</keyword>
<keyword id="KW-0677">Repeat</keyword>
<keyword id="KW-0964">Secreted</keyword>
<keyword id="KW-0732">Signal</keyword>
<organism>
    <name type="scientific">Holotrichia diomphalia</name>
    <name type="common">Korean black chafer</name>
    <dbReference type="NCBI Taxonomy" id="33394"/>
    <lineage>
        <taxon>Eukaryota</taxon>
        <taxon>Metazoa</taxon>
        <taxon>Ecdysozoa</taxon>
        <taxon>Arthropoda</taxon>
        <taxon>Hexapoda</taxon>
        <taxon>Insecta</taxon>
        <taxon>Pterygota</taxon>
        <taxon>Neoptera</taxon>
        <taxon>Endopterygota</taxon>
        <taxon>Coleoptera</taxon>
        <taxon>Polyphaga</taxon>
        <taxon>Scarabaeiformia</taxon>
        <taxon>Scarabaeidae</taxon>
        <taxon>Melolonthinae</taxon>
        <taxon>Holotrichia</taxon>
    </lineage>
</organism>
<accession>Q25055</accession>